<sequence length="322" mass="35894">MSLLRNFFSFTFSANSIITKPYFAIPIKAMEATSELNLNYPKPISAPPPPISKDIELRRAMEASSKSSLFNLTRDDILYEDEYLMAVNKPKGVYCEAVLRSAPQIVLDSSSEYHLANRLDRDTSGVMIITKSHKVAAKLVKAFTEHKIRKSYIALCIGSSPNWRRVTVSSGHGRSKHGAWRVYAALDVGRVLPGGSFVRDMETTFEVVSVNSVKNESCELEDVNHVIVAEGERELSCGGDDDDVVVVVRAFPRSGRTHQIRLHCQYLGIPIRGDVKYHGVYEWNGRTFEGHELHAECLSLDHPVTGDSIVIRAPLPYWAAGD</sequence>
<protein>
    <recommendedName>
        <fullName>RNA pseudouridine synthase 1</fullName>
        <ecNumber>5.4.99.-</ecNumber>
    </recommendedName>
    <alternativeName>
        <fullName>RNA pseudouridylate synthase 1</fullName>
    </alternativeName>
    <alternativeName>
        <fullName>RNA-uridine isomerase 1</fullName>
    </alternativeName>
</protein>
<comment type="catalytic activity">
    <reaction>
        <text>a uridine in RNA = a pseudouridine in RNA</text>
        <dbReference type="Rhea" id="RHEA:48348"/>
        <dbReference type="Rhea" id="RHEA-COMP:12068"/>
        <dbReference type="Rhea" id="RHEA-COMP:12069"/>
        <dbReference type="ChEBI" id="CHEBI:65314"/>
        <dbReference type="ChEBI" id="CHEBI:65315"/>
    </reaction>
</comment>
<comment type="similarity">
    <text evidence="2">Belongs to the pseudouridine synthase RluA family.</text>
</comment>
<comment type="sequence caution" evidence="2">
    <conflict type="erroneous gene model prediction">
        <sequence resource="EMBL-CDS" id="AAG50905"/>
    </conflict>
</comment>
<comment type="sequence caution" evidence="2">
    <conflict type="erroneous initiation">
        <sequence resource="EMBL-CDS" id="AAG51501"/>
    </conflict>
</comment>
<organism>
    <name type="scientific">Arabidopsis thaliana</name>
    <name type="common">Mouse-ear cress</name>
    <dbReference type="NCBI Taxonomy" id="3702"/>
    <lineage>
        <taxon>Eukaryota</taxon>
        <taxon>Viridiplantae</taxon>
        <taxon>Streptophyta</taxon>
        <taxon>Embryophyta</taxon>
        <taxon>Tracheophyta</taxon>
        <taxon>Spermatophyta</taxon>
        <taxon>Magnoliopsida</taxon>
        <taxon>eudicotyledons</taxon>
        <taxon>Gunneridae</taxon>
        <taxon>Pentapetalae</taxon>
        <taxon>rosids</taxon>
        <taxon>malvids</taxon>
        <taxon>Brassicales</taxon>
        <taxon>Brassicaceae</taxon>
        <taxon>Camelineae</taxon>
        <taxon>Arabidopsis</taxon>
    </lineage>
</organism>
<accession>Q7XA65</accession>
<accession>Q9C7K8</accession>
<accession>Q9C7Y0</accession>
<gene>
    <name type="ordered locus">At1g56345</name>
    <name type="ORF">F13N6.19</name>
    <name type="ORF">F14G9.4</name>
</gene>
<feature type="chain" id="PRO_0000371422" description="RNA pseudouridine synthase 1">
    <location>
        <begin position="1"/>
        <end position="322"/>
    </location>
</feature>
<feature type="active site" evidence="1">
    <location>
        <position position="120"/>
    </location>
</feature>
<dbReference type="EC" id="5.4.99.-"/>
<dbReference type="EMBL" id="AC058785">
    <property type="protein sequence ID" value="AAG51501.1"/>
    <property type="status" value="ALT_INIT"/>
    <property type="molecule type" value="Genomic_DNA"/>
</dbReference>
<dbReference type="EMBL" id="AC069159">
    <property type="protein sequence ID" value="AAG50905.1"/>
    <property type="status" value="ALT_SEQ"/>
    <property type="molecule type" value="Genomic_DNA"/>
</dbReference>
<dbReference type="EMBL" id="CP002684">
    <property type="protein sequence ID" value="AEE33381.1"/>
    <property type="molecule type" value="Genomic_DNA"/>
</dbReference>
<dbReference type="EMBL" id="BT010200">
    <property type="protein sequence ID" value="AAQ22669.1"/>
    <property type="molecule type" value="mRNA"/>
</dbReference>
<dbReference type="EMBL" id="AK228224">
    <property type="protein sequence ID" value="BAF00174.1"/>
    <property type="molecule type" value="mRNA"/>
</dbReference>
<dbReference type="PIR" id="D96605">
    <property type="entry name" value="D96605"/>
</dbReference>
<dbReference type="RefSeq" id="NP_176031.2">
    <property type="nucleotide sequence ID" value="NM_104514.3"/>
</dbReference>
<dbReference type="SMR" id="Q7XA65"/>
<dbReference type="FunCoup" id="Q7XA65">
    <property type="interactions" value="163"/>
</dbReference>
<dbReference type="IntAct" id="Q7XA65">
    <property type="interactions" value="1"/>
</dbReference>
<dbReference type="STRING" id="3702.Q7XA65"/>
<dbReference type="PaxDb" id="3702-AT1G56345.1"/>
<dbReference type="ProteomicsDB" id="225932"/>
<dbReference type="EnsemblPlants" id="AT1G56345.1">
    <property type="protein sequence ID" value="AT1G56345.1"/>
    <property type="gene ID" value="AT1G56345"/>
</dbReference>
<dbReference type="GeneID" id="842088"/>
<dbReference type="Gramene" id="AT1G56345.1">
    <property type="protein sequence ID" value="AT1G56345.1"/>
    <property type="gene ID" value="AT1G56345"/>
</dbReference>
<dbReference type="KEGG" id="ath:AT1G56345"/>
<dbReference type="Araport" id="AT1G56345"/>
<dbReference type="TAIR" id="AT1G56345"/>
<dbReference type="eggNOG" id="KOG1919">
    <property type="taxonomic scope" value="Eukaryota"/>
</dbReference>
<dbReference type="HOGENOM" id="CLU_063147_0_0_1"/>
<dbReference type="InParanoid" id="Q7XA65"/>
<dbReference type="OMA" id="EPNYAGW"/>
<dbReference type="PhylomeDB" id="Q7XA65"/>
<dbReference type="BioCyc" id="ARA:AT1G56345-MONOMER"/>
<dbReference type="PRO" id="PR:Q7XA65"/>
<dbReference type="Proteomes" id="UP000006548">
    <property type="component" value="Chromosome 1"/>
</dbReference>
<dbReference type="ExpressionAtlas" id="Q7XA65">
    <property type="expression patterns" value="baseline and differential"/>
</dbReference>
<dbReference type="GO" id="GO:0009982">
    <property type="term" value="F:pseudouridine synthase activity"/>
    <property type="evidence" value="ECO:0000304"/>
    <property type="project" value="TAIR"/>
</dbReference>
<dbReference type="GO" id="GO:0003723">
    <property type="term" value="F:RNA binding"/>
    <property type="evidence" value="ECO:0007669"/>
    <property type="project" value="UniProtKB-KW"/>
</dbReference>
<dbReference type="GO" id="GO:0001522">
    <property type="term" value="P:pseudouridine synthesis"/>
    <property type="evidence" value="ECO:0007669"/>
    <property type="project" value="InterPro"/>
</dbReference>
<dbReference type="CDD" id="cd02869">
    <property type="entry name" value="PseudoU_synth_RluA_like"/>
    <property type="match status" value="1"/>
</dbReference>
<dbReference type="Gene3D" id="3.30.2350.10">
    <property type="entry name" value="Pseudouridine synthase"/>
    <property type="match status" value="1"/>
</dbReference>
<dbReference type="InterPro" id="IPR020103">
    <property type="entry name" value="PsdUridine_synth_cat_dom_sf"/>
</dbReference>
<dbReference type="InterPro" id="IPR006224">
    <property type="entry name" value="PsdUridine_synth_RluA-like_CS"/>
</dbReference>
<dbReference type="InterPro" id="IPR006145">
    <property type="entry name" value="PsdUridine_synth_RsuA/RluA"/>
</dbReference>
<dbReference type="InterPro" id="IPR050188">
    <property type="entry name" value="RluA_PseudoU_synthase"/>
</dbReference>
<dbReference type="PANTHER" id="PTHR21600">
    <property type="entry name" value="MITOCHONDRIAL RNA PSEUDOURIDINE SYNTHASE"/>
    <property type="match status" value="1"/>
</dbReference>
<dbReference type="PANTHER" id="PTHR21600:SF47">
    <property type="entry name" value="RNA PSEUDOURIDINE SYNTHASE 1"/>
    <property type="match status" value="1"/>
</dbReference>
<dbReference type="Pfam" id="PF00849">
    <property type="entry name" value="PseudoU_synth_2"/>
    <property type="match status" value="1"/>
</dbReference>
<dbReference type="SUPFAM" id="SSF55120">
    <property type="entry name" value="Pseudouridine synthase"/>
    <property type="match status" value="1"/>
</dbReference>
<dbReference type="PROSITE" id="PS01129">
    <property type="entry name" value="PSI_RLU"/>
    <property type="match status" value="1"/>
</dbReference>
<proteinExistence type="evidence at transcript level"/>
<name>PUS1_ARATH</name>
<keyword id="KW-0413">Isomerase</keyword>
<keyword id="KW-1185">Reference proteome</keyword>
<keyword id="KW-0694">RNA-binding</keyword>
<evidence type="ECO:0000250" key="1"/>
<evidence type="ECO:0000305" key="2"/>
<reference key="1">
    <citation type="journal article" date="2000" name="Nature">
        <title>Sequence and analysis of chromosome 1 of the plant Arabidopsis thaliana.</title>
        <authorList>
            <person name="Theologis A."/>
            <person name="Ecker J.R."/>
            <person name="Palm C.J."/>
            <person name="Federspiel N.A."/>
            <person name="Kaul S."/>
            <person name="White O."/>
            <person name="Alonso J."/>
            <person name="Altafi H."/>
            <person name="Araujo R."/>
            <person name="Bowman C.L."/>
            <person name="Brooks S.Y."/>
            <person name="Buehler E."/>
            <person name="Chan A."/>
            <person name="Chao Q."/>
            <person name="Chen H."/>
            <person name="Cheuk R.F."/>
            <person name="Chin C.W."/>
            <person name="Chung M.K."/>
            <person name="Conn L."/>
            <person name="Conway A.B."/>
            <person name="Conway A.R."/>
            <person name="Creasy T.H."/>
            <person name="Dewar K."/>
            <person name="Dunn P."/>
            <person name="Etgu P."/>
            <person name="Feldblyum T.V."/>
            <person name="Feng J.-D."/>
            <person name="Fong B."/>
            <person name="Fujii C.Y."/>
            <person name="Gill J.E."/>
            <person name="Goldsmith A.D."/>
            <person name="Haas B."/>
            <person name="Hansen N.F."/>
            <person name="Hughes B."/>
            <person name="Huizar L."/>
            <person name="Hunter J.L."/>
            <person name="Jenkins J."/>
            <person name="Johnson-Hopson C."/>
            <person name="Khan S."/>
            <person name="Khaykin E."/>
            <person name="Kim C.J."/>
            <person name="Koo H.L."/>
            <person name="Kremenetskaia I."/>
            <person name="Kurtz D.B."/>
            <person name="Kwan A."/>
            <person name="Lam B."/>
            <person name="Langin-Hooper S."/>
            <person name="Lee A."/>
            <person name="Lee J.M."/>
            <person name="Lenz C.A."/>
            <person name="Li J.H."/>
            <person name="Li Y.-P."/>
            <person name="Lin X."/>
            <person name="Liu S.X."/>
            <person name="Liu Z.A."/>
            <person name="Luros J.S."/>
            <person name="Maiti R."/>
            <person name="Marziali A."/>
            <person name="Militscher J."/>
            <person name="Miranda M."/>
            <person name="Nguyen M."/>
            <person name="Nierman W.C."/>
            <person name="Osborne B.I."/>
            <person name="Pai G."/>
            <person name="Peterson J."/>
            <person name="Pham P.K."/>
            <person name="Rizzo M."/>
            <person name="Rooney T."/>
            <person name="Rowley D."/>
            <person name="Sakano H."/>
            <person name="Salzberg S.L."/>
            <person name="Schwartz J.R."/>
            <person name="Shinn P."/>
            <person name="Southwick A.M."/>
            <person name="Sun H."/>
            <person name="Tallon L.J."/>
            <person name="Tambunga G."/>
            <person name="Toriumi M.J."/>
            <person name="Town C.D."/>
            <person name="Utterback T."/>
            <person name="Van Aken S."/>
            <person name="Vaysberg M."/>
            <person name="Vysotskaia V.S."/>
            <person name="Walker M."/>
            <person name="Wu D."/>
            <person name="Yu G."/>
            <person name="Fraser C.M."/>
            <person name="Venter J.C."/>
            <person name="Davis R.W."/>
        </authorList>
    </citation>
    <scope>NUCLEOTIDE SEQUENCE [LARGE SCALE GENOMIC DNA]</scope>
    <source>
        <strain>cv. Columbia</strain>
    </source>
</reference>
<reference key="2">
    <citation type="journal article" date="2017" name="Plant J.">
        <title>Araport11: a complete reannotation of the Arabidopsis thaliana reference genome.</title>
        <authorList>
            <person name="Cheng C.Y."/>
            <person name="Krishnakumar V."/>
            <person name="Chan A.P."/>
            <person name="Thibaud-Nissen F."/>
            <person name="Schobel S."/>
            <person name="Town C.D."/>
        </authorList>
    </citation>
    <scope>GENOME REANNOTATION</scope>
    <source>
        <strain>cv. Columbia</strain>
    </source>
</reference>
<reference key="3">
    <citation type="journal article" date="2003" name="Science">
        <title>Empirical analysis of transcriptional activity in the Arabidopsis genome.</title>
        <authorList>
            <person name="Yamada K."/>
            <person name="Lim J."/>
            <person name="Dale J.M."/>
            <person name="Chen H."/>
            <person name="Shinn P."/>
            <person name="Palm C.J."/>
            <person name="Southwick A.M."/>
            <person name="Wu H.C."/>
            <person name="Kim C.J."/>
            <person name="Nguyen M."/>
            <person name="Pham P.K."/>
            <person name="Cheuk R.F."/>
            <person name="Karlin-Newmann G."/>
            <person name="Liu S.X."/>
            <person name="Lam B."/>
            <person name="Sakano H."/>
            <person name="Wu T."/>
            <person name="Yu G."/>
            <person name="Miranda M."/>
            <person name="Quach H.L."/>
            <person name="Tripp M."/>
            <person name="Chang C.H."/>
            <person name="Lee J.M."/>
            <person name="Toriumi M.J."/>
            <person name="Chan M.M."/>
            <person name="Tang C.C."/>
            <person name="Onodera C.S."/>
            <person name="Deng J.M."/>
            <person name="Akiyama K."/>
            <person name="Ansari Y."/>
            <person name="Arakawa T."/>
            <person name="Banh J."/>
            <person name="Banno F."/>
            <person name="Bowser L."/>
            <person name="Brooks S.Y."/>
            <person name="Carninci P."/>
            <person name="Chao Q."/>
            <person name="Choy N."/>
            <person name="Enju A."/>
            <person name="Goldsmith A.D."/>
            <person name="Gurjal M."/>
            <person name="Hansen N.F."/>
            <person name="Hayashizaki Y."/>
            <person name="Johnson-Hopson C."/>
            <person name="Hsuan V.W."/>
            <person name="Iida K."/>
            <person name="Karnes M."/>
            <person name="Khan S."/>
            <person name="Koesema E."/>
            <person name="Ishida J."/>
            <person name="Jiang P.X."/>
            <person name="Jones T."/>
            <person name="Kawai J."/>
            <person name="Kamiya A."/>
            <person name="Meyers C."/>
            <person name="Nakajima M."/>
            <person name="Narusaka M."/>
            <person name="Seki M."/>
            <person name="Sakurai T."/>
            <person name="Satou M."/>
            <person name="Tamse R."/>
            <person name="Vaysberg M."/>
            <person name="Wallender E.K."/>
            <person name="Wong C."/>
            <person name="Yamamura Y."/>
            <person name="Yuan S."/>
            <person name="Shinozaki K."/>
            <person name="Davis R.W."/>
            <person name="Theologis A."/>
            <person name="Ecker J.R."/>
        </authorList>
    </citation>
    <scope>NUCLEOTIDE SEQUENCE [LARGE SCALE MRNA]</scope>
    <source>
        <strain>cv. Columbia</strain>
    </source>
</reference>
<reference key="4">
    <citation type="submission" date="2006-07" db="EMBL/GenBank/DDBJ databases">
        <title>Large-scale analysis of RIKEN Arabidopsis full-length (RAFL) cDNAs.</title>
        <authorList>
            <person name="Totoki Y."/>
            <person name="Seki M."/>
            <person name="Ishida J."/>
            <person name="Nakajima M."/>
            <person name="Enju A."/>
            <person name="Kamiya A."/>
            <person name="Narusaka M."/>
            <person name="Shin-i T."/>
            <person name="Nakagawa M."/>
            <person name="Sakamoto N."/>
            <person name="Oishi K."/>
            <person name="Kohara Y."/>
            <person name="Kobayashi M."/>
            <person name="Toyoda A."/>
            <person name="Sakaki Y."/>
            <person name="Sakurai T."/>
            <person name="Iida K."/>
            <person name="Akiyama K."/>
            <person name="Satou M."/>
            <person name="Toyoda T."/>
            <person name="Konagaya A."/>
            <person name="Carninci P."/>
            <person name="Kawai J."/>
            <person name="Hayashizaki Y."/>
            <person name="Shinozaki K."/>
        </authorList>
    </citation>
    <scope>NUCLEOTIDE SEQUENCE [LARGE SCALE MRNA]</scope>
    <source>
        <strain>cv. Columbia</strain>
    </source>
</reference>